<evidence type="ECO:0000255" key="1">
    <source>
        <dbReference type="HAMAP-Rule" id="MF_01061"/>
    </source>
</evidence>
<evidence type="ECO:0000256" key="2">
    <source>
        <dbReference type="SAM" id="MobiDB-lite"/>
    </source>
</evidence>
<accession>B7NH31</accession>
<feature type="chain" id="PRO_1000136434" description="Replication restart protein DnaT">
    <location>
        <begin position="1"/>
        <end position="179"/>
    </location>
</feature>
<feature type="region of interest" description="Disordered" evidence="2">
    <location>
        <begin position="156"/>
        <end position="179"/>
    </location>
</feature>
<reference key="1">
    <citation type="journal article" date="2009" name="PLoS Genet.">
        <title>Organised genome dynamics in the Escherichia coli species results in highly diverse adaptive paths.</title>
        <authorList>
            <person name="Touchon M."/>
            <person name="Hoede C."/>
            <person name="Tenaillon O."/>
            <person name="Barbe V."/>
            <person name="Baeriswyl S."/>
            <person name="Bidet P."/>
            <person name="Bingen E."/>
            <person name="Bonacorsi S."/>
            <person name="Bouchier C."/>
            <person name="Bouvet O."/>
            <person name="Calteau A."/>
            <person name="Chiapello H."/>
            <person name="Clermont O."/>
            <person name="Cruveiller S."/>
            <person name="Danchin A."/>
            <person name="Diard M."/>
            <person name="Dossat C."/>
            <person name="Karoui M.E."/>
            <person name="Frapy E."/>
            <person name="Garry L."/>
            <person name="Ghigo J.M."/>
            <person name="Gilles A.M."/>
            <person name="Johnson J."/>
            <person name="Le Bouguenec C."/>
            <person name="Lescat M."/>
            <person name="Mangenot S."/>
            <person name="Martinez-Jehanne V."/>
            <person name="Matic I."/>
            <person name="Nassif X."/>
            <person name="Oztas S."/>
            <person name="Petit M.A."/>
            <person name="Pichon C."/>
            <person name="Rouy Z."/>
            <person name="Ruf C.S."/>
            <person name="Schneider D."/>
            <person name="Tourret J."/>
            <person name="Vacherie B."/>
            <person name="Vallenet D."/>
            <person name="Medigue C."/>
            <person name="Rocha E.P.C."/>
            <person name="Denamur E."/>
        </authorList>
    </citation>
    <scope>NUCLEOTIDE SEQUENCE [LARGE SCALE GENOMIC DNA]</scope>
    <source>
        <strain>UMN026 / ExPEC</strain>
    </source>
</reference>
<comment type="function">
    <text evidence="1">Involved in the restart of stalled replication forks, which reloads the replicative helicase on sites other than the origin of replication. Can function in multiple replication restart pathways. Displaces ssDNA from a PriB-ssDNA complex. Probably forms a spiral filament on ssDNA.</text>
</comment>
<comment type="subunit">
    <text evidence="1">Homooligomerizes. Interacts with PriB. Component of the replication restart primosome. Primosome assembly occurs via a 'hand-off' mechanism. PriA binds to replication forks, subsequently PriB then DnaT bind; DnaT then displaces ssDNA to generate the helicase loading substrate.</text>
</comment>
<comment type="similarity">
    <text evidence="1">Belongs to the DnaT family.</text>
</comment>
<protein>
    <recommendedName>
        <fullName evidence="1">Replication restart protein DnaT</fullName>
    </recommendedName>
</protein>
<organism>
    <name type="scientific">Escherichia coli O17:K52:H18 (strain UMN026 / ExPEC)</name>
    <dbReference type="NCBI Taxonomy" id="585056"/>
    <lineage>
        <taxon>Bacteria</taxon>
        <taxon>Pseudomonadati</taxon>
        <taxon>Pseudomonadota</taxon>
        <taxon>Gammaproteobacteria</taxon>
        <taxon>Enterobacterales</taxon>
        <taxon>Enterobacteriaceae</taxon>
        <taxon>Escherichia</taxon>
    </lineage>
</organism>
<keyword id="KW-0235">DNA replication</keyword>
<keyword id="KW-0238">DNA-binding</keyword>
<keyword id="KW-0639">Primosome</keyword>
<name>DNAT_ECOLU</name>
<sequence length="179" mass="19397">MSSRVLTPDVVGIDALVHDHQTVLAKAEGGVVAVFANNAPAFYAVTPARLAELLALEEKLARPGSDVALDDQLYQEPQAAPVAVPMGKFAMYPDWQPDADFIRLAALWGVALRAPVTTEELASFIAYWQAEGKVFHHVQWQQKLARSLQIGRASNGGLPKRDVNTVSEPDSQIPPGFRG</sequence>
<gene>
    <name evidence="1" type="primary">dnaT</name>
    <name type="ordered locus">ECUMN_4985</name>
</gene>
<dbReference type="EMBL" id="CU928163">
    <property type="protein sequence ID" value="CAR16096.1"/>
    <property type="molecule type" value="Genomic_DNA"/>
</dbReference>
<dbReference type="RefSeq" id="WP_000098815.1">
    <property type="nucleotide sequence ID" value="NC_011751.1"/>
</dbReference>
<dbReference type="RefSeq" id="YP_002415560.1">
    <property type="nucleotide sequence ID" value="NC_011751.1"/>
</dbReference>
<dbReference type="SMR" id="B7NH31"/>
<dbReference type="STRING" id="585056.ECUMN_4985"/>
<dbReference type="KEGG" id="eum:ECUMN_4985"/>
<dbReference type="PATRIC" id="fig|585056.7.peg.5150"/>
<dbReference type="HOGENOM" id="CLU_1501592_0_0_6"/>
<dbReference type="Proteomes" id="UP000007097">
    <property type="component" value="Chromosome"/>
</dbReference>
<dbReference type="GO" id="GO:1990077">
    <property type="term" value="C:primosome complex"/>
    <property type="evidence" value="ECO:0007669"/>
    <property type="project" value="UniProtKB-KW"/>
</dbReference>
<dbReference type="GO" id="GO:0006269">
    <property type="term" value="P:DNA replication, synthesis of primer"/>
    <property type="evidence" value="ECO:0007669"/>
    <property type="project" value="UniProtKB-UniRule"/>
</dbReference>
<dbReference type="Gene3D" id="1.10.8.1180">
    <property type="match status" value="1"/>
</dbReference>
<dbReference type="HAMAP" id="MF_01061">
    <property type="entry name" value="DnaT"/>
    <property type="match status" value="1"/>
</dbReference>
<dbReference type="InterPro" id="IPR020917">
    <property type="entry name" value="DnaT"/>
</dbReference>
<dbReference type="InterPro" id="IPR040480">
    <property type="entry name" value="DnaT_DNA_bind"/>
</dbReference>
<dbReference type="NCBIfam" id="NF002770">
    <property type="entry name" value="PRK02854.1"/>
    <property type="match status" value="1"/>
</dbReference>
<dbReference type="Pfam" id="PF17948">
    <property type="entry name" value="DnaT"/>
    <property type="match status" value="1"/>
</dbReference>
<proteinExistence type="inferred from homology"/>